<name>ATP6_PSEU2</name>
<reference key="1">
    <citation type="journal article" date="2005" name="Proc. Natl. Acad. Sci. U.S.A.">
        <title>Comparison of the complete genome sequences of Pseudomonas syringae pv. syringae B728a and pv. tomato DC3000.</title>
        <authorList>
            <person name="Feil H."/>
            <person name="Feil W.S."/>
            <person name="Chain P."/>
            <person name="Larimer F."/>
            <person name="Dibartolo G."/>
            <person name="Copeland A."/>
            <person name="Lykidis A."/>
            <person name="Trong S."/>
            <person name="Nolan M."/>
            <person name="Goltsman E."/>
            <person name="Thiel J."/>
            <person name="Malfatti S."/>
            <person name="Loper J.E."/>
            <person name="Lapidus A."/>
            <person name="Detter J.C."/>
            <person name="Land M."/>
            <person name="Richardson P.M."/>
            <person name="Kyrpides N.C."/>
            <person name="Ivanova N."/>
            <person name="Lindow S.E."/>
        </authorList>
    </citation>
    <scope>NUCLEOTIDE SEQUENCE [LARGE SCALE GENOMIC DNA]</scope>
    <source>
        <strain>B728a</strain>
    </source>
</reference>
<sequence length="289" mass="31739">MAEQTASGYIQHHLQNLTFGHLPNGEWGFAHTAAEAKEMGFWAFHVDTLGWSVALGLIFVLIFRMAAKKATSGQPGALQNFVEVLVEFVDGSVKDSFHGRSAVIAPLALTIFVWVFLMNAVDLVPVDWIPQLAMMISGDSHIPFRAVSTTDPNATLGMALSVFALIIFYSIKVKGIGGFIGELTLHPFGSKNLFVQALLIPVNFLLEFVTLIAKPISLALRLFGNMYAGELVFILIAVMFGSGLLWLSGLGVVLQWAWAVFHILIITLQAFIFMMLTIVYLSMAHEDNH</sequence>
<feature type="chain" id="PRO_0000362402" description="ATP synthase subunit a">
    <location>
        <begin position="1"/>
        <end position="289"/>
    </location>
</feature>
<feature type="transmembrane region" description="Helical" evidence="1">
    <location>
        <begin position="43"/>
        <end position="63"/>
    </location>
</feature>
<feature type="transmembrane region" description="Helical" evidence="1">
    <location>
        <begin position="101"/>
        <end position="121"/>
    </location>
</feature>
<feature type="transmembrane region" description="Helical" evidence="1">
    <location>
        <begin position="160"/>
        <end position="180"/>
    </location>
</feature>
<feature type="transmembrane region" description="Helical" evidence="1">
    <location>
        <begin position="193"/>
        <end position="213"/>
    </location>
</feature>
<feature type="transmembrane region" description="Helical" evidence="1">
    <location>
        <begin position="232"/>
        <end position="252"/>
    </location>
</feature>
<feature type="transmembrane region" description="Helical" evidence="1">
    <location>
        <begin position="259"/>
        <end position="279"/>
    </location>
</feature>
<keyword id="KW-0066">ATP synthesis</keyword>
<keyword id="KW-0997">Cell inner membrane</keyword>
<keyword id="KW-1003">Cell membrane</keyword>
<keyword id="KW-0138">CF(0)</keyword>
<keyword id="KW-0375">Hydrogen ion transport</keyword>
<keyword id="KW-0406">Ion transport</keyword>
<keyword id="KW-0472">Membrane</keyword>
<keyword id="KW-0812">Transmembrane</keyword>
<keyword id="KW-1133">Transmembrane helix</keyword>
<keyword id="KW-0813">Transport</keyword>
<dbReference type="EMBL" id="CP000075">
    <property type="protein sequence ID" value="AAY40154.1"/>
    <property type="molecule type" value="Genomic_DNA"/>
</dbReference>
<dbReference type="RefSeq" id="WP_003315954.1">
    <property type="nucleotide sequence ID" value="NC_007005.1"/>
</dbReference>
<dbReference type="RefSeq" id="YP_238192.1">
    <property type="nucleotide sequence ID" value="NC_007005.1"/>
</dbReference>
<dbReference type="SMR" id="Q4ZL18"/>
<dbReference type="STRING" id="205918.Psyr_5127"/>
<dbReference type="GeneID" id="77281006"/>
<dbReference type="KEGG" id="psb:Psyr_5127"/>
<dbReference type="PATRIC" id="fig|205918.7.peg.5288"/>
<dbReference type="eggNOG" id="COG0356">
    <property type="taxonomic scope" value="Bacteria"/>
</dbReference>
<dbReference type="HOGENOM" id="CLU_041018_1_0_6"/>
<dbReference type="OrthoDB" id="9789241at2"/>
<dbReference type="Proteomes" id="UP000000426">
    <property type="component" value="Chromosome"/>
</dbReference>
<dbReference type="GO" id="GO:0005886">
    <property type="term" value="C:plasma membrane"/>
    <property type="evidence" value="ECO:0007669"/>
    <property type="project" value="UniProtKB-SubCell"/>
</dbReference>
<dbReference type="GO" id="GO:0045259">
    <property type="term" value="C:proton-transporting ATP synthase complex"/>
    <property type="evidence" value="ECO:0007669"/>
    <property type="project" value="UniProtKB-KW"/>
</dbReference>
<dbReference type="GO" id="GO:0046933">
    <property type="term" value="F:proton-transporting ATP synthase activity, rotational mechanism"/>
    <property type="evidence" value="ECO:0007669"/>
    <property type="project" value="UniProtKB-UniRule"/>
</dbReference>
<dbReference type="GO" id="GO:0042777">
    <property type="term" value="P:proton motive force-driven plasma membrane ATP synthesis"/>
    <property type="evidence" value="ECO:0007669"/>
    <property type="project" value="TreeGrafter"/>
</dbReference>
<dbReference type="CDD" id="cd00310">
    <property type="entry name" value="ATP-synt_Fo_a_6"/>
    <property type="match status" value="1"/>
</dbReference>
<dbReference type="FunFam" id="1.20.120.220:FF:000002">
    <property type="entry name" value="ATP synthase subunit a"/>
    <property type="match status" value="1"/>
</dbReference>
<dbReference type="Gene3D" id="1.20.120.220">
    <property type="entry name" value="ATP synthase, F0 complex, subunit A"/>
    <property type="match status" value="1"/>
</dbReference>
<dbReference type="HAMAP" id="MF_01393">
    <property type="entry name" value="ATP_synth_a_bact"/>
    <property type="match status" value="1"/>
</dbReference>
<dbReference type="InterPro" id="IPR045082">
    <property type="entry name" value="ATP_syn_F0_a_bact/chloroplast"/>
</dbReference>
<dbReference type="InterPro" id="IPR000568">
    <property type="entry name" value="ATP_synth_F0_asu"/>
</dbReference>
<dbReference type="InterPro" id="IPR023011">
    <property type="entry name" value="ATP_synth_F0_asu_AS"/>
</dbReference>
<dbReference type="InterPro" id="IPR035908">
    <property type="entry name" value="F0_ATP_A_sf"/>
</dbReference>
<dbReference type="NCBIfam" id="TIGR01131">
    <property type="entry name" value="ATP_synt_6_or_A"/>
    <property type="match status" value="1"/>
</dbReference>
<dbReference type="NCBIfam" id="NF004477">
    <property type="entry name" value="PRK05815.1-1"/>
    <property type="match status" value="1"/>
</dbReference>
<dbReference type="PANTHER" id="PTHR42823">
    <property type="entry name" value="ATP SYNTHASE SUBUNIT A, CHLOROPLASTIC"/>
    <property type="match status" value="1"/>
</dbReference>
<dbReference type="PANTHER" id="PTHR42823:SF3">
    <property type="entry name" value="ATP SYNTHASE SUBUNIT A, CHLOROPLASTIC"/>
    <property type="match status" value="1"/>
</dbReference>
<dbReference type="Pfam" id="PF00119">
    <property type="entry name" value="ATP-synt_A"/>
    <property type="match status" value="1"/>
</dbReference>
<dbReference type="SUPFAM" id="SSF81336">
    <property type="entry name" value="F1F0 ATP synthase subunit A"/>
    <property type="match status" value="1"/>
</dbReference>
<dbReference type="PROSITE" id="PS00449">
    <property type="entry name" value="ATPASE_A"/>
    <property type="match status" value="1"/>
</dbReference>
<comment type="function">
    <text evidence="1">Key component of the proton channel; it plays a direct role in the translocation of protons across the membrane.</text>
</comment>
<comment type="subunit">
    <text evidence="1">F-type ATPases have 2 components, CF(1) - the catalytic core - and CF(0) - the membrane proton channel. CF(1) has five subunits: alpha(3), beta(3), gamma(1), delta(1), epsilon(1). CF(0) has three main subunits: a(1), b(2) and c(9-12). The alpha and beta chains form an alternating ring which encloses part of the gamma chain. CF(1) is attached to CF(0) by a central stalk formed by the gamma and epsilon chains, while a peripheral stalk is formed by the delta and b chains.</text>
</comment>
<comment type="subcellular location">
    <subcellularLocation>
        <location evidence="1">Cell inner membrane</location>
        <topology evidence="1">Multi-pass membrane protein</topology>
    </subcellularLocation>
</comment>
<comment type="similarity">
    <text evidence="1">Belongs to the ATPase A chain family.</text>
</comment>
<organism>
    <name type="scientific">Pseudomonas syringae pv. syringae (strain B728a)</name>
    <dbReference type="NCBI Taxonomy" id="205918"/>
    <lineage>
        <taxon>Bacteria</taxon>
        <taxon>Pseudomonadati</taxon>
        <taxon>Pseudomonadota</taxon>
        <taxon>Gammaproteobacteria</taxon>
        <taxon>Pseudomonadales</taxon>
        <taxon>Pseudomonadaceae</taxon>
        <taxon>Pseudomonas</taxon>
        <taxon>Pseudomonas syringae</taxon>
    </lineage>
</organism>
<proteinExistence type="inferred from homology"/>
<evidence type="ECO:0000255" key="1">
    <source>
        <dbReference type="HAMAP-Rule" id="MF_01393"/>
    </source>
</evidence>
<accession>Q4ZL18</accession>
<protein>
    <recommendedName>
        <fullName evidence="1">ATP synthase subunit a</fullName>
    </recommendedName>
    <alternativeName>
        <fullName evidence="1">ATP synthase F0 sector subunit a</fullName>
    </alternativeName>
    <alternativeName>
        <fullName evidence="1">F-ATPase subunit 6</fullName>
    </alternativeName>
</protein>
<gene>
    <name evidence="1" type="primary">atpB</name>
    <name type="ordered locus">Psyr_5127</name>
</gene>